<protein>
    <recommendedName>
        <fullName evidence="1">Small ribosomal subunit protein uS7</fullName>
    </recommendedName>
    <alternativeName>
        <fullName evidence="2">30S ribosomal protein S7</fullName>
    </alternativeName>
</protein>
<sequence length="156" mass="17657">MPRRREVPKRDVLPDPKFGSVELTKFMNVLMIDGKKSVAERIVYGALEQIEKKTGKVAIEVFNEAIANAKPIVEVKSRRVGGANYQVPVEVRPSRRLALAMRWVRDAARKRGEKSMDLRLAGELIDASEGRGGALKKREEVHRMAEANKAFSHFRF</sequence>
<gene>
    <name evidence="1" type="primary">rpsG</name>
    <name type="ordered locus">NMA0136</name>
</gene>
<comment type="function">
    <text evidence="1">One of the primary rRNA binding proteins, it binds directly to 16S rRNA where it nucleates assembly of the head domain of the 30S subunit. Is located at the subunit interface close to the decoding center, probably blocks exit of the E-site tRNA.</text>
</comment>
<comment type="subunit">
    <text evidence="1">Part of the 30S ribosomal subunit. Contacts proteins S9 and S11.</text>
</comment>
<comment type="similarity">
    <text evidence="1">Belongs to the universal ribosomal protein uS7 family.</text>
</comment>
<proteinExistence type="inferred from homology"/>
<evidence type="ECO:0000255" key="1">
    <source>
        <dbReference type="HAMAP-Rule" id="MF_00480"/>
    </source>
</evidence>
<evidence type="ECO:0000305" key="2"/>
<reference key="1">
    <citation type="journal article" date="2000" name="Nature">
        <title>Complete DNA sequence of a serogroup A strain of Neisseria meningitidis Z2491.</title>
        <authorList>
            <person name="Parkhill J."/>
            <person name="Achtman M."/>
            <person name="James K.D."/>
            <person name="Bentley S.D."/>
            <person name="Churcher C.M."/>
            <person name="Klee S.R."/>
            <person name="Morelli G."/>
            <person name="Basham D."/>
            <person name="Brown D."/>
            <person name="Chillingworth T."/>
            <person name="Davies R.M."/>
            <person name="Davis P."/>
            <person name="Devlin K."/>
            <person name="Feltwell T."/>
            <person name="Hamlin N."/>
            <person name="Holroyd S."/>
            <person name="Jagels K."/>
            <person name="Leather S."/>
            <person name="Moule S."/>
            <person name="Mungall K.L."/>
            <person name="Quail M.A."/>
            <person name="Rajandream M.A."/>
            <person name="Rutherford K.M."/>
            <person name="Simmonds M."/>
            <person name="Skelton J."/>
            <person name="Whitehead S."/>
            <person name="Spratt B.G."/>
            <person name="Barrell B.G."/>
        </authorList>
    </citation>
    <scope>NUCLEOTIDE SEQUENCE [LARGE SCALE GENOMIC DNA]</scope>
    <source>
        <strain>DSM 15465 / Z2491</strain>
    </source>
</reference>
<feature type="chain" id="PRO_0000124307" description="Small ribosomal subunit protein uS7">
    <location>
        <begin position="1"/>
        <end position="156"/>
    </location>
</feature>
<keyword id="KW-0687">Ribonucleoprotein</keyword>
<keyword id="KW-0689">Ribosomal protein</keyword>
<keyword id="KW-0694">RNA-binding</keyword>
<keyword id="KW-0699">rRNA-binding</keyword>
<keyword id="KW-0820">tRNA-binding</keyword>
<organism>
    <name type="scientific">Neisseria meningitidis serogroup A / serotype 4A (strain DSM 15465 / Z2491)</name>
    <dbReference type="NCBI Taxonomy" id="122587"/>
    <lineage>
        <taxon>Bacteria</taxon>
        <taxon>Pseudomonadati</taxon>
        <taxon>Pseudomonadota</taxon>
        <taxon>Betaproteobacteria</taxon>
        <taxon>Neisseriales</taxon>
        <taxon>Neisseriaceae</taxon>
        <taxon>Neisseria</taxon>
    </lineage>
</organism>
<accession>P66613</accession>
<accession>A1INZ7</accession>
<accession>Q9JR15</accession>
<name>RS7_NEIMA</name>
<dbReference type="EMBL" id="AL157959">
    <property type="protein sequence ID" value="CAM07454.1"/>
    <property type="molecule type" value="Genomic_DNA"/>
</dbReference>
<dbReference type="RefSeq" id="WP_002215391.1">
    <property type="nucleotide sequence ID" value="NC_003116.1"/>
</dbReference>
<dbReference type="SMR" id="P66613"/>
<dbReference type="EnsemblBacteria" id="CAM07454">
    <property type="protein sequence ID" value="CAM07454"/>
    <property type="gene ID" value="NMA0136"/>
</dbReference>
<dbReference type="GeneID" id="93387211"/>
<dbReference type="KEGG" id="nma:NMA0136"/>
<dbReference type="HOGENOM" id="CLU_072226_1_1_4"/>
<dbReference type="Proteomes" id="UP000000626">
    <property type="component" value="Chromosome"/>
</dbReference>
<dbReference type="GO" id="GO:0015935">
    <property type="term" value="C:small ribosomal subunit"/>
    <property type="evidence" value="ECO:0007669"/>
    <property type="project" value="InterPro"/>
</dbReference>
<dbReference type="GO" id="GO:0019843">
    <property type="term" value="F:rRNA binding"/>
    <property type="evidence" value="ECO:0007669"/>
    <property type="project" value="UniProtKB-UniRule"/>
</dbReference>
<dbReference type="GO" id="GO:0003735">
    <property type="term" value="F:structural constituent of ribosome"/>
    <property type="evidence" value="ECO:0007669"/>
    <property type="project" value="InterPro"/>
</dbReference>
<dbReference type="GO" id="GO:0000049">
    <property type="term" value="F:tRNA binding"/>
    <property type="evidence" value="ECO:0007669"/>
    <property type="project" value="UniProtKB-UniRule"/>
</dbReference>
<dbReference type="GO" id="GO:0006412">
    <property type="term" value="P:translation"/>
    <property type="evidence" value="ECO:0007669"/>
    <property type="project" value="UniProtKB-UniRule"/>
</dbReference>
<dbReference type="CDD" id="cd14869">
    <property type="entry name" value="uS7_Bacteria"/>
    <property type="match status" value="1"/>
</dbReference>
<dbReference type="FunFam" id="1.10.455.10:FF:000001">
    <property type="entry name" value="30S ribosomal protein S7"/>
    <property type="match status" value="1"/>
</dbReference>
<dbReference type="Gene3D" id="1.10.455.10">
    <property type="entry name" value="Ribosomal protein S7 domain"/>
    <property type="match status" value="1"/>
</dbReference>
<dbReference type="HAMAP" id="MF_00480_B">
    <property type="entry name" value="Ribosomal_uS7_B"/>
    <property type="match status" value="1"/>
</dbReference>
<dbReference type="InterPro" id="IPR000235">
    <property type="entry name" value="Ribosomal_uS7"/>
</dbReference>
<dbReference type="InterPro" id="IPR005717">
    <property type="entry name" value="Ribosomal_uS7_bac/org-type"/>
</dbReference>
<dbReference type="InterPro" id="IPR020606">
    <property type="entry name" value="Ribosomal_uS7_CS"/>
</dbReference>
<dbReference type="InterPro" id="IPR023798">
    <property type="entry name" value="Ribosomal_uS7_dom"/>
</dbReference>
<dbReference type="InterPro" id="IPR036823">
    <property type="entry name" value="Ribosomal_uS7_dom_sf"/>
</dbReference>
<dbReference type="NCBIfam" id="TIGR01029">
    <property type="entry name" value="rpsG_bact"/>
    <property type="match status" value="1"/>
</dbReference>
<dbReference type="PANTHER" id="PTHR11205">
    <property type="entry name" value="RIBOSOMAL PROTEIN S7"/>
    <property type="match status" value="1"/>
</dbReference>
<dbReference type="Pfam" id="PF00177">
    <property type="entry name" value="Ribosomal_S7"/>
    <property type="match status" value="1"/>
</dbReference>
<dbReference type="PIRSF" id="PIRSF002122">
    <property type="entry name" value="RPS7p_RPS7a_RPS5e_RPS7o"/>
    <property type="match status" value="1"/>
</dbReference>
<dbReference type="SUPFAM" id="SSF47973">
    <property type="entry name" value="Ribosomal protein S7"/>
    <property type="match status" value="1"/>
</dbReference>
<dbReference type="PROSITE" id="PS00052">
    <property type="entry name" value="RIBOSOMAL_S7"/>
    <property type="match status" value="1"/>
</dbReference>